<proteinExistence type="inferred from homology"/>
<reference key="1">
    <citation type="journal article" date="2002" name="Proc. Natl. Acad. Sci. U.S.A.">
        <title>Extensive mosaic structure revealed by the complete genome sequence of uropathogenic Escherichia coli.</title>
        <authorList>
            <person name="Welch R.A."/>
            <person name="Burland V."/>
            <person name="Plunkett G. III"/>
            <person name="Redford P."/>
            <person name="Roesch P."/>
            <person name="Rasko D."/>
            <person name="Buckles E.L."/>
            <person name="Liou S.-R."/>
            <person name="Boutin A."/>
            <person name="Hackett J."/>
            <person name="Stroud D."/>
            <person name="Mayhew G.F."/>
            <person name="Rose D.J."/>
            <person name="Zhou S."/>
            <person name="Schwartz D.C."/>
            <person name="Perna N.T."/>
            <person name="Mobley H.L.T."/>
            <person name="Donnenberg M.S."/>
            <person name="Blattner F.R."/>
        </authorList>
    </citation>
    <scope>NUCLEOTIDE SEQUENCE [LARGE SCALE GENOMIC DNA]</scope>
    <source>
        <strain>CFT073 / ATCC 700928 / UPEC</strain>
    </source>
</reference>
<feature type="signal peptide" evidence="1">
    <location>
        <begin position="1"/>
        <end position="19"/>
    </location>
</feature>
<feature type="chain" id="PRO_0000042807" description="Outer membrane protein assembly factor BamD">
    <location>
        <begin position="20"/>
        <end position="245"/>
    </location>
</feature>
<feature type="lipid moiety-binding region" description="N-palmitoyl cysteine" evidence="1">
    <location>
        <position position="20"/>
    </location>
</feature>
<feature type="lipid moiety-binding region" description="S-diacylglycerol cysteine" evidence="1">
    <location>
        <position position="20"/>
    </location>
</feature>
<dbReference type="EMBL" id="AE014075">
    <property type="protein sequence ID" value="AAN81566.1"/>
    <property type="molecule type" value="Genomic_DNA"/>
</dbReference>
<dbReference type="RefSeq" id="WP_000197686.1">
    <property type="nucleotide sequence ID" value="NZ_CP051263.1"/>
</dbReference>
<dbReference type="SMR" id="P0AC03"/>
<dbReference type="STRING" id="199310.c3117"/>
<dbReference type="GeneID" id="93774491"/>
<dbReference type="KEGG" id="ecc:c3117"/>
<dbReference type="eggNOG" id="COG4105">
    <property type="taxonomic scope" value="Bacteria"/>
</dbReference>
<dbReference type="HOGENOM" id="CLU_065982_0_2_6"/>
<dbReference type="BioCyc" id="ECOL199310:C3117-MONOMER"/>
<dbReference type="Proteomes" id="UP000001410">
    <property type="component" value="Chromosome"/>
</dbReference>
<dbReference type="GO" id="GO:1990063">
    <property type="term" value="C:Bam protein complex"/>
    <property type="evidence" value="ECO:0007669"/>
    <property type="project" value="TreeGrafter"/>
</dbReference>
<dbReference type="GO" id="GO:0043165">
    <property type="term" value="P:Gram-negative-bacterium-type cell outer membrane assembly"/>
    <property type="evidence" value="ECO:0007669"/>
    <property type="project" value="UniProtKB-UniRule"/>
</dbReference>
<dbReference type="GO" id="GO:0051205">
    <property type="term" value="P:protein insertion into membrane"/>
    <property type="evidence" value="ECO:0007669"/>
    <property type="project" value="UniProtKB-UniRule"/>
</dbReference>
<dbReference type="CDD" id="cd15830">
    <property type="entry name" value="BamD"/>
    <property type="match status" value="1"/>
</dbReference>
<dbReference type="FunFam" id="1.25.40.10:FF:000015">
    <property type="entry name" value="Outer membrane protein assembly factor BamD"/>
    <property type="match status" value="1"/>
</dbReference>
<dbReference type="Gene3D" id="1.25.40.10">
    <property type="entry name" value="Tetratricopeptide repeat domain"/>
    <property type="match status" value="1"/>
</dbReference>
<dbReference type="HAMAP" id="MF_00922">
    <property type="entry name" value="OM_assembly_BamD"/>
    <property type="match status" value="1"/>
</dbReference>
<dbReference type="InterPro" id="IPR017689">
    <property type="entry name" value="BamD"/>
</dbReference>
<dbReference type="InterPro" id="IPR039565">
    <property type="entry name" value="BamD-like"/>
</dbReference>
<dbReference type="InterPro" id="IPR011990">
    <property type="entry name" value="TPR-like_helical_dom_sf"/>
</dbReference>
<dbReference type="NCBIfam" id="TIGR03302">
    <property type="entry name" value="OM_YfiO"/>
    <property type="match status" value="1"/>
</dbReference>
<dbReference type="NCBIfam" id="NF008119">
    <property type="entry name" value="PRK10866.1"/>
    <property type="match status" value="1"/>
</dbReference>
<dbReference type="PANTHER" id="PTHR37423:SF1">
    <property type="entry name" value="OUTER MEMBRANE PROTEIN ASSEMBLY FACTOR BAMD"/>
    <property type="match status" value="1"/>
</dbReference>
<dbReference type="PANTHER" id="PTHR37423">
    <property type="entry name" value="SOLUBLE LYTIC MUREIN TRANSGLYCOSYLASE-RELATED"/>
    <property type="match status" value="1"/>
</dbReference>
<dbReference type="Pfam" id="PF13525">
    <property type="entry name" value="YfiO"/>
    <property type="match status" value="1"/>
</dbReference>
<dbReference type="SUPFAM" id="SSF48452">
    <property type="entry name" value="TPR-like"/>
    <property type="match status" value="1"/>
</dbReference>
<dbReference type="PROSITE" id="PS51257">
    <property type="entry name" value="PROKAR_LIPOPROTEIN"/>
    <property type="match status" value="1"/>
</dbReference>
<name>BAMD_ECOL6</name>
<comment type="function">
    <text evidence="1">Part of the outer membrane protein assembly complex, which is involved in assembly and insertion of beta-barrel proteins into the outer membrane. Constitutes, with BamA, the core component of the assembly machinery.</text>
</comment>
<comment type="subunit">
    <text evidence="1">Part of the Bam complex, which is composed of the outer membrane protein BamA, and four lipoproteins BamB, BamC, BamD and BamE.</text>
</comment>
<comment type="subcellular location">
    <subcellularLocation>
        <location evidence="1">Cell outer membrane</location>
        <topology evidence="1">Lipid-anchor</topology>
    </subcellularLocation>
</comment>
<comment type="similarity">
    <text evidence="1">Belongs to the BamD family.</text>
</comment>
<evidence type="ECO:0000255" key="1">
    <source>
        <dbReference type="HAMAP-Rule" id="MF_00922"/>
    </source>
</evidence>
<keyword id="KW-0998">Cell outer membrane</keyword>
<keyword id="KW-0449">Lipoprotein</keyword>
<keyword id="KW-0472">Membrane</keyword>
<keyword id="KW-0564">Palmitate</keyword>
<keyword id="KW-1185">Reference proteome</keyword>
<keyword id="KW-0732">Signal</keyword>
<sequence length="245" mass="27829">MTRMKYLVAAATLSLFLAGCSGSKEEVPDNPPNEIYATAQQKLQDGNWRQAITQLEALDNRYPFGPYSQQVQLDLIYAYYKNADLPLAQAAIDRFIRLNPTHPNIDYVMYMRGLTNMALDDSALQGFFGVDRSDRDPQHARAAFSDFSKLVRGYPNSQYTTDATKRLVFLKDRLAKYEYSVAEYYTERGAWVAVVNRVEGMLRDYPDTQATRDALPLMENAYRQMQMNAQAEKVAKIIAANSSNT</sequence>
<gene>
    <name evidence="1" type="primary">bamD</name>
    <name type="synonym">yfiO</name>
    <name type="ordered locus">c3117</name>
</gene>
<accession>P0AC03</accession>
<accession>P77146</accession>
<accession>Q47344</accession>
<organism>
    <name type="scientific">Escherichia coli O6:H1 (strain CFT073 / ATCC 700928 / UPEC)</name>
    <dbReference type="NCBI Taxonomy" id="199310"/>
    <lineage>
        <taxon>Bacteria</taxon>
        <taxon>Pseudomonadati</taxon>
        <taxon>Pseudomonadota</taxon>
        <taxon>Gammaproteobacteria</taxon>
        <taxon>Enterobacterales</taxon>
        <taxon>Enterobacteriaceae</taxon>
        <taxon>Escherichia</taxon>
    </lineage>
</organism>
<protein>
    <recommendedName>
        <fullName evidence="1">Outer membrane protein assembly factor BamD</fullName>
    </recommendedName>
</protein>